<sequence length="527" mass="56928">MPHTVATPPPLLQVRGISKQFSGVVVLKSIDFTLQPGQVHALLGGNGAGKSTLMKIIAGILPPDTGVIEMNGQPCFNLTPAKAHQLGIYLVPQEPMLFANLSVQENILFRLPKHQADKKKMAQLLKNLGCHLDLSVSAGSLEVADQQLVEIMRGLIRDSHILILDEPTASLTPAETHRLFSQIRMLLQQGVGVVFISHKLPEIRQLADWVSVMRDGGIALSGATADFSTEDMIQAMTPEAQKGALTDSQKLWLELPGNRRAQSHAQSQQPVIHVHDLSGEGFAHISFHVQAGEILGLAGVVGAGRTELAETLYGLRPASTGNVILEEVNITAMKTANRLAAGLVYLPEDRQASGLYLDAPLSWNVCALAHDRQGLWTQPAQEAAVLERYRRALNIKFSHLEQPVRTLSGGNQQKLLIAKCLEANPLLLIIDEPTRGVDVSARSDIYQLIRSIAEQQVAIIFISSDLEEVVQMADRVLVMHQGEINGALSGAAMNVDTIMHMAFGEHRSASEPQGGTASSAENKGASC</sequence>
<protein>
    <recommendedName>
        <fullName evidence="1">Autoinducer 2 import ATP-binding protein LsrA</fullName>
        <shortName evidence="1">AI-2 import ATP-binding protein LsrA</shortName>
        <ecNumber evidence="1">7.6.2.13</ecNumber>
    </recommendedName>
</protein>
<keyword id="KW-0067">ATP-binding</keyword>
<keyword id="KW-0997">Cell inner membrane</keyword>
<keyword id="KW-1003">Cell membrane</keyword>
<keyword id="KW-0472">Membrane</keyword>
<keyword id="KW-0547">Nucleotide-binding</keyword>
<keyword id="KW-0677">Repeat</keyword>
<keyword id="KW-1278">Translocase</keyword>
<keyword id="KW-0813">Transport</keyword>
<name>LSRA_YERPN</name>
<feature type="chain" id="PRO_0000351312" description="Autoinducer 2 import ATP-binding protein LsrA">
    <location>
        <begin position="1"/>
        <end position="527"/>
    </location>
</feature>
<feature type="domain" description="ABC transporter 1" evidence="2">
    <location>
        <begin position="12"/>
        <end position="240"/>
    </location>
</feature>
<feature type="domain" description="ABC transporter 2" evidence="2">
    <location>
        <begin position="266"/>
        <end position="506"/>
    </location>
</feature>
<feature type="region of interest" description="Disordered" evidence="3">
    <location>
        <begin position="507"/>
        <end position="527"/>
    </location>
</feature>
<feature type="compositionally biased region" description="Polar residues" evidence="3">
    <location>
        <begin position="510"/>
        <end position="521"/>
    </location>
</feature>
<feature type="binding site" evidence="2">
    <location>
        <begin position="44"/>
        <end position="51"/>
    </location>
    <ligand>
        <name>ATP</name>
        <dbReference type="ChEBI" id="CHEBI:30616"/>
    </ligand>
</feature>
<organism>
    <name type="scientific">Yersinia pestis bv. Antiqua (strain Nepal516)</name>
    <dbReference type="NCBI Taxonomy" id="377628"/>
    <lineage>
        <taxon>Bacteria</taxon>
        <taxon>Pseudomonadati</taxon>
        <taxon>Pseudomonadota</taxon>
        <taxon>Gammaproteobacteria</taxon>
        <taxon>Enterobacterales</taxon>
        <taxon>Yersiniaceae</taxon>
        <taxon>Yersinia</taxon>
    </lineage>
</organism>
<comment type="function">
    <text evidence="1">Part of the ABC transporter complex LsrABCD involved in autoinducer 2 (AI-2) import. Responsible for energy coupling to the transport system.</text>
</comment>
<comment type="catalytic activity">
    <reaction evidence="1">
        <text>ATP + H2O + (2R,4S)-2-methyl-2,3,3,4-tetrahydroxytetrahydrofuran-[AI-2-binding protein]Side 1 = ADP + phosphate + (2R,4S)-2-methyl-2,3,3,4-tetrahydroxytetrahydrofuranSide 2 + [AI-2-binding protein]Side 1.</text>
        <dbReference type="EC" id="7.6.2.13"/>
    </reaction>
</comment>
<comment type="subunit">
    <text evidence="1">The complex is composed of two ATP-binding proteins (LsrA), two transmembrane proteins (LsrC and LsrD) and a solute-binding protein (LsrB).</text>
</comment>
<comment type="subcellular location">
    <subcellularLocation>
        <location evidence="1">Cell inner membrane</location>
        <topology evidence="1">Peripheral membrane protein</topology>
    </subcellularLocation>
</comment>
<comment type="similarity">
    <text evidence="4">Belongs to the ABC transporter superfamily. AI-2 autoinducer porter (TC 3.A.1.2.8) family.</text>
</comment>
<accession>Q1CN15</accession>
<accession>C4GNI2</accession>
<gene>
    <name type="primary">lsrA</name>
    <name type="ordered locus">YPN_0282</name>
    <name type="ORF">YP516_0279</name>
</gene>
<reference key="1">
    <citation type="journal article" date="2006" name="J. Bacteriol.">
        <title>Complete genome sequence of Yersinia pestis strains Antiqua and Nepal516: evidence of gene reduction in an emerging pathogen.</title>
        <authorList>
            <person name="Chain P.S.G."/>
            <person name="Hu P."/>
            <person name="Malfatti S.A."/>
            <person name="Radnedge L."/>
            <person name="Larimer F."/>
            <person name="Vergez L.M."/>
            <person name="Worsham P."/>
            <person name="Chu M.C."/>
            <person name="Andersen G.L."/>
        </authorList>
    </citation>
    <scope>NUCLEOTIDE SEQUENCE [LARGE SCALE GENOMIC DNA]</scope>
    <source>
        <strain>Nepal516</strain>
    </source>
</reference>
<reference key="2">
    <citation type="submission" date="2009-04" db="EMBL/GenBank/DDBJ databases">
        <title>Yersinia pestis Nepal516A whole genome shotgun sequencing project.</title>
        <authorList>
            <person name="Plunkett G. III"/>
            <person name="Anderson B.D."/>
            <person name="Baumler D.J."/>
            <person name="Burland V."/>
            <person name="Cabot E.L."/>
            <person name="Glasner J.D."/>
            <person name="Mau B."/>
            <person name="Neeno-Eckwall E."/>
            <person name="Perna N.T."/>
            <person name="Munk A.C."/>
            <person name="Tapia R."/>
            <person name="Green L.D."/>
            <person name="Rogers Y.C."/>
            <person name="Detter J.C."/>
            <person name="Bruce D.C."/>
            <person name="Brettin T.S."/>
        </authorList>
    </citation>
    <scope>NUCLEOTIDE SEQUENCE [LARGE SCALE GENOMIC DNA]</scope>
    <source>
        <strain>Nepal516</strain>
    </source>
</reference>
<proteinExistence type="inferred from homology"/>
<evidence type="ECO:0000250" key="1">
    <source>
        <dbReference type="UniProtKB" id="P77257"/>
    </source>
</evidence>
<evidence type="ECO:0000255" key="2">
    <source>
        <dbReference type="PROSITE-ProRule" id="PRU00434"/>
    </source>
</evidence>
<evidence type="ECO:0000256" key="3">
    <source>
        <dbReference type="SAM" id="MobiDB-lite"/>
    </source>
</evidence>
<evidence type="ECO:0000305" key="4"/>
<dbReference type="EC" id="7.6.2.13" evidence="1"/>
<dbReference type="EMBL" id="CP000305">
    <property type="protein sequence ID" value="ABG16615.1"/>
    <property type="molecule type" value="Genomic_DNA"/>
</dbReference>
<dbReference type="EMBL" id="ACNQ01000006">
    <property type="protein sequence ID" value="EEO78064.1"/>
    <property type="molecule type" value="Genomic_DNA"/>
</dbReference>
<dbReference type="PIR" id="AC0051">
    <property type="entry name" value="AC0051"/>
</dbReference>
<dbReference type="RefSeq" id="WP_002209192.1">
    <property type="nucleotide sequence ID" value="NZ_ACNQ01000006.1"/>
</dbReference>
<dbReference type="SMR" id="Q1CN15"/>
<dbReference type="GeneID" id="57974198"/>
<dbReference type="KEGG" id="ypn:YPN_0282"/>
<dbReference type="HOGENOM" id="CLU_000604_92_1_6"/>
<dbReference type="Proteomes" id="UP000008936">
    <property type="component" value="Chromosome"/>
</dbReference>
<dbReference type="GO" id="GO:0005886">
    <property type="term" value="C:plasma membrane"/>
    <property type="evidence" value="ECO:0007669"/>
    <property type="project" value="UniProtKB-SubCell"/>
</dbReference>
<dbReference type="GO" id="GO:0005524">
    <property type="term" value="F:ATP binding"/>
    <property type="evidence" value="ECO:0007669"/>
    <property type="project" value="UniProtKB-KW"/>
</dbReference>
<dbReference type="GO" id="GO:0016887">
    <property type="term" value="F:ATP hydrolysis activity"/>
    <property type="evidence" value="ECO:0007669"/>
    <property type="project" value="InterPro"/>
</dbReference>
<dbReference type="CDD" id="cd03216">
    <property type="entry name" value="ABC_Carb_Monos_I"/>
    <property type="match status" value="1"/>
</dbReference>
<dbReference type="CDD" id="cd03215">
    <property type="entry name" value="ABC_Carb_Monos_II"/>
    <property type="match status" value="1"/>
</dbReference>
<dbReference type="Gene3D" id="3.40.50.300">
    <property type="entry name" value="P-loop containing nucleotide triphosphate hydrolases"/>
    <property type="match status" value="2"/>
</dbReference>
<dbReference type="InterPro" id="IPR003593">
    <property type="entry name" value="AAA+_ATPase"/>
</dbReference>
<dbReference type="InterPro" id="IPR050107">
    <property type="entry name" value="ABC_carbohydrate_import_ATPase"/>
</dbReference>
<dbReference type="InterPro" id="IPR003439">
    <property type="entry name" value="ABC_transporter-like_ATP-bd"/>
</dbReference>
<dbReference type="InterPro" id="IPR017871">
    <property type="entry name" value="ABC_transporter-like_CS"/>
</dbReference>
<dbReference type="InterPro" id="IPR027417">
    <property type="entry name" value="P-loop_NTPase"/>
</dbReference>
<dbReference type="NCBIfam" id="NF011967">
    <property type="entry name" value="PRK15439.1"/>
    <property type="match status" value="1"/>
</dbReference>
<dbReference type="PANTHER" id="PTHR43790:SF2">
    <property type="entry name" value="AUTOINDUCER 2 IMPORT ATP-BINDING PROTEIN LSRA"/>
    <property type="match status" value="1"/>
</dbReference>
<dbReference type="PANTHER" id="PTHR43790">
    <property type="entry name" value="CARBOHYDRATE TRANSPORT ATP-BINDING PROTEIN MG119-RELATED"/>
    <property type="match status" value="1"/>
</dbReference>
<dbReference type="Pfam" id="PF00005">
    <property type="entry name" value="ABC_tran"/>
    <property type="match status" value="2"/>
</dbReference>
<dbReference type="SMART" id="SM00382">
    <property type="entry name" value="AAA"/>
    <property type="match status" value="2"/>
</dbReference>
<dbReference type="SUPFAM" id="SSF52540">
    <property type="entry name" value="P-loop containing nucleoside triphosphate hydrolases"/>
    <property type="match status" value="2"/>
</dbReference>
<dbReference type="PROSITE" id="PS00211">
    <property type="entry name" value="ABC_TRANSPORTER_1"/>
    <property type="match status" value="1"/>
</dbReference>
<dbReference type="PROSITE" id="PS50893">
    <property type="entry name" value="ABC_TRANSPORTER_2"/>
    <property type="match status" value="2"/>
</dbReference>